<protein>
    <recommendedName>
        <fullName evidence="5">Cytochrome P450 monooxygenase 151</fullName>
        <ecNumber evidence="4">1.-.-.-</ecNumber>
    </recommendedName>
</protein>
<proteinExistence type="evidence at protein level"/>
<comment type="function">
    <text evidence="4">Cytochrome P450 monooxygenase that is able to use dehydroabietic acid and testosterone as substrates for oxidation, suggesting that the natural substrate(s) may be structurally related to steroid compounds.</text>
</comment>
<comment type="cofactor">
    <cofactor evidence="1">
        <name>heme</name>
        <dbReference type="ChEBI" id="CHEBI:30413"/>
    </cofactor>
</comment>
<comment type="pathway">
    <text evidence="6">Secondary metabolite biosynthesis.</text>
</comment>
<comment type="subcellular location">
    <subcellularLocation>
        <location evidence="2">Membrane</location>
        <topology evidence="2">Single-pass membrane protein</topology>
    </subcellularLocation>
</comment>
<comment type="similarity">
    <text evidence="6">Belongs to the cytochrome P450 family.</text>
</comment>
<feature type="chain" id="PRO_0000451362" description="Cytochrome P450 monooxygenase 151">
    <location>
        <begin position="1"/>
        <end position="497"/>
    </location>
</feature>
<feature type="transmembrane region" description="Helical" evidence="2">
    <location>
        <begin position="1"/>
        <end position="21"/>
    </location>
</feature>
<feature type="binding site" description="axial binding residue" evidence="1">
    <location>
        <position position="441"/>
    </location>
    <ligand>
        <name>heme</name>
        <dbReference type="ChEBI" id="CHEBI:30413"/>
    </ligand>
    <ligandPart>
        <name>Fe</name>
        <dbReference type="ChEBI" id="CHEBI:18248"/>
    </ligandPart>
</feature>
<feature type="glycosylation site" description="N-linked (GlcNAc...) asparagine" evidence="3">
    <location>
        <position position="292"/>
    </location>
</feature>
<feature type="glycosylation site" description="N-linked (GlcNAc...) asparagine" evidence="3">
    <location>
        <position position="397"/>
    </location>
</feature>
<name>CY151_POSPM</name>
<organism>
    <name type="scientific">Postia placenta (strain ATCC 44394 / Madison 698-R)</name>
    <name type="common">Brown rot fungus</name>
    <name type="synonym">Poria monticola</name>
    <dbReference type="NCBI Taxonomy" id="561896"/>
    <lineage>
        <taxon>Eukaryota</taxon>
        <taxon>Fungi</taxon>
        <taxon>Dikarya</taxon>
        <taxon>Basidiomycota</taxon>
        <taxon>Agaricomycotina</taxon>
        <taxon>Agaricomycetes</taxon>
        <taxon>Polyporales</taxon>
        <taxon>Adustoporiaceae</taxon>
        <taxon>Rhodonia</taxon>
    </lineage>
</organism>
<accession>F1SYD1</accession>
<evidence type="ECO:0000250" key="1">
    <source>
        <dbReference type="UniProtKB" id="P04798"/>
    </source>
</evidence>
<evidence type="ECO:0000255" key="2"/>
<evidence type="ECO:0000255" key="3">
    <source>
        <dbReference type="PROSITE-ProRule" id="PRU00498"/>
    </source>
</evidence>
<evidence type="ECO:0000269" key="4">
    <source>
    </source>
</evidence>
<evidence type="ECO:0000303" key="5">
    <source>
    </source>
</evidence>
<evidence type="ECO:0000305" key="6"/>
<reference key="1">
    <citation type="journal article" date="2012" name="Arch. Microbiol.">
        <title>Molecular identification and functional characterization of cytochrome P450 monooxygenases from the brown-rot basidiomycete Postia placenta.</title>
        <authorList>
            <person name="Ide M."/>
            <person name="Ichinose H."/>
            <person name="Wariishi H."/>
        </authorList>
    </citation>
    <scope>NUCLEOTIDE SEQUENCE [MRNA]</scope>
    <scope>IDENTIFICATION</scope>
    <scope>FUNCTION</scope>
    <scope>CATALYTIC ACTIVITY</scope>
    <source>
        <strain>ATCC 44394 / Madison 698-R</strain>
    </source>
</reference>
<gene>
    <name evidence="5" type="primary">CYP151</name>
    <name evidence="5" type="synonym">CYP512P2</name>
</gene>
<dbReference type="EC" id="1.-.-.-" evidence="4"/>
<dbReference type="EMBL" id="AB573342">
    <property type="protein sequence ID" value="BAK09475.1"/>
    <property type="molecule type" value="mRNA"/>
</dbReference>
<dbReference type="SMR" id="F1SYD1"/>
<dbReference type="GlyCosmos" id="F1SYD1">
    <property type="glycosylation" value="2 sites, No reported glycans"/>
</dbReference>
<dbReference type="GO" id="GO:0016020">
    <property type="term" value="C:membrane"/>
    <property type="evidence" value="ECO:0007669"/>
    <property type="project" value="UniProtKB-SubCell"/>
</dbReference>
<dbReference type="GO" id="GO:0020037">
    <property type="term" value="F:heme binding"/>
    <property type="evidence" value="ECO:0007669"/>
    <property type="project" value="InterPro"/>
</dbReference>
<dbReference type="GO" id="GO:0005506">
    <property type="term" value="F:iron ion binding"/>
    <property type="evidence" value="ECO:0007669"/>
    <property type="project" value="InterPro"/>
</dbReference>
<dbReference type="GO" id="GO:0004497">
    <property type="term" value="F:monooxygenase activity"/>
    <property type="evidence" value="ECO:0007669"/>
    <property type="project" value="UniProtKB-KW"/>
</dbReference>
<dbReference type="GO" id="GO:0016705">
    <property type="term" value="F:oxidoreductase activity, acting on paired donors, with incorporation or reduction of molecular oxygen"/>
    <property type="evidence" value="ECO:0007669"/>
    <property type="project" value="InterPro"/>
</dbReference>
<dbReference type="GO" id="GO:0019748">
    <property type="term" value="P:secondary metabolic process"/>
    <property type="evidence" value="ECO:0007669"/>
    <property type="project" value="UniProtKB-ARBA"/>
</dbReference>
<dbReference type="CDD" id="cd11041">
    <property type="entry name" value="CYP503A1-like"/>
    <property type="match status" value="1"/>
</dbReference>
<dbReference type="Gene3D" id="1.10.630.10">
    <property type="entry name" value="Cytochrome P450"/>
    <property type="match status" value="1"/>
</dbReference>
<dbReference type="InterPro" id="IPR001128">
    <property type="entry name" value="Cyt_P450"/>
</dbReference>
<dbReference type="InterPro" id="IPR017972">
    <property type="entry name" value="Cyt_P450_CS"/>
</dbReference>
<dbReference type="InterPro" id="IPR002401">
    <property type="entry name" value="Cyt_P450_E_grp-I"/>
</dbReference>
<dbReference type="InterPro" id="IPR036396">
    <property type="entry name" value="Cyt_P450_sf"/>
</dbReference>
<dbReference type="PANTHER" id="PTHR46206">
    <property type="entry name" value="CYTOCHROME P450"/>
    <property type="match status" value="1"/>
</dbReference>
<dbReference type="Pfam" id="PF00067">
    <property type="entry name" value="p450"/>
    <property type="match status" value="1"/>
</dbReference>
<dbReference type="PRINTS" id="PR00463">
    <property type="entry name" value="EP450I"/>
</dbReference>
<dbReference type="SUPFAM" id="SSF48264">
    <property type="entry name" value="Cytochrome P450"/>
    <property type="match status" value="1"/>
</dbReference>
<dbReference type="PROSITE" id="PS00086">
    <property type="entry name" value="CYTOCHROME_P450"/>
    <property type="match status" value="1"/>
</dbReference>
<keyword id="KW-0325">Glycoprotein</keyword>
<keyword id="KW-0349">Heme</keyword>
<keyword id="KW-0408">Iron</keyword>
<keyword id="KW-0472">Membrane</keyword>
<keyword id="KW-0479">Metal-binding</keyword>
<keyword id="KW-0503">Monooxygenase</keyword>
<keyword id="KW-0560">Oxidoreductase</keyword>
<keyword id="KW-0812">Transmembrane</keyword>
<keyword id="KW-1133">Transmembrane helix</keyword>
<sequence>MTDLVPVYYAFAGVVAALLFYKWQSDPLRAIPTIGPSAPLLSYLGAIRFFKDASGVLQEGYDKYNVFKVAMIDRWAVVVSGAKMNEELRSIPDDQMSFMDAADELVQTKYTIAPDVLIHPIHITVIKEQLTRNLAPLFHEVVKEVEAAMQELIPAKGDDWIEIDGYSTVTQIITRASSRVFVGFPLCQNAEYLRIATTYSAEVMKGAMIMSVLPDFLKHIVGPLLPWSRRALRRAAPFLLPIITERRRLLKEYGRDWEDKPNDLLMWIIEEARRVGREDSTDLMVQGIMASNFTAIHTSSLTFTHALYHLAANPEYIQSLREEIEEVIRTDGWTKVSMGSMWKLDSFLKESHRVNGISGISVMRLALKDVTFSDGTFIPAGTFVAAAATSTHHDEENYSDATVFKPFRFSDMRASESEKNKHHYVSTSAEYIGFGHGKHACPGRFFAANELKIMLASIVLNYDVKFEDEGKRPANVWFATTVLPAPGAKVMFRKRQT</sequence>